<feature type="signal peptide" evidence="2">
    <location>
        <begin position="1"/>
        <end position="24"/>
    </location>
</feature>
<feature type="chain" id="PRO_0000283632" description="Laccase-4">
    <location>
        <begin position="25"/>
        <end position="558"/>
    </location>
</feature>
<feature type="domain" description="Plastocyanin-like 1">
    <location>
        <begin position="32"/>
        <end position="148"/>
    </location>
</feature>
<feature type="domain" description="Plastocyanin-like 2">
    <location>
        <begin position="158"/>
        <end position="308"/>
    </location>
</feature>
<feature type="domain" description="Plastocyanin-like 3">
    <location>
        <begin position="408"/>
        <end position="542"/>
    </location>
</feature>
<feature type="binding site" description="type 2 copper site" evidence="1">
    <location>
        <position position="82"/>
    </location>
    <ligand>
        <name>Cu cation</name>
        <dbReference type="ChEBI" id="CHEBI:23378"/>
        <label>1</label>
    </ligand>
</feature>
<feature type="binding site" description="type 3 copper site" evidence="1">
    <location>
        <position position="84"/>
    </location>
    <ligand>
        <name>Cu cation</name>
        <dbReference type="ChEBI" id="CHEBI:23378"/>
        <label>2</label>
    </ligand>
</feature>
<feature type="binding site" description="type 3 copper site" evidence="1">
    <location>
        <position position="127"/>
    </location>
    <ligand>
        <name>Cu cation</name>
        <dbReference type="ChEBI" id="CHEBI:23378"/>
        <label>2</label>
    </ligand>
</feature>
<feature type="binding site" description="type 3 copper site" evidence="1">
    <location>
        <position position="129"/>
    </location>
    <ligand>
        <name>Cu cation</name>
        <dbReference type="ChEBI" id="CHEBI:23378"/>
        <label>3</label>
    </ligand>
</feature>
<feature type="binding site" description="type 1 copper site" evidence="1">
    <location>
        <position position="459"/>
    </location>
    <ligand>
        <name>Cu cation</name>
        <dbReference type="ChEBI" id="CHEBI:23378"/>
        <label>4</label>
    </ligand>
</feature>
<feature type="binding site" description="type 2 copper site" evidence="1">
    <location>
        <position position="462"/>
    </location>
    <ligand>
        <name>Cu cation</name>
        <dbReference type="ChEBI" id="CHEBI:23378"/>
        <label>1</label>
    </ligand>
</feature>
<feature type="binding site" description="type 3 copper site" evidence="1">
    <location>
        <position position="464"/>
    </location>
    <ligand>
        <name>Cu cation</name>
        <dbReference type="ChEBI" id="CHEBI:23378"/>
        <label>3</label>
    </ligand>
</feature>
<feature type="binding site" description="type 3 copper site" evidence="1">
    <location>
        <position position="521"/>
    </location>
    <ligand>
        <name>Cu cation</name>
        <dbReference type="ChEBI" id="CHEBI:23378"/>
        <label>3</label>
    </ligand>
</feature>
<feature type="binding site" description="type 1 copper site" evidence="1">
    <location>
        <position position="522"/>
    </location>
    <ligand>
        <name>Cu cation</name>
        <dbReference type="ChEBI" id="CHEBI:23378"/>
        <label>4</label>
    </ligand>
</feature>
<feature type="binding site" description="type 3 copper site" evidence="1">
    <location>
        <position position="523"/>
    </location>
    <ligand>
        <name>Cu cation</name>
        <dbReference type="ChEBI" id="CHEBI:23378"/>
        <label>2</label>
    </ligand>
</feature>
<feature type="binding site" description="type 1 copper site" evidence="1">
    <location>
        <position position="527"/>
    </location>
    <ligand>
        <name>Cu cation</name>
        <dbReference type="ChEBI" id="CHEBI:23378"/>
        <label>4</label>
    </ligand>
</feature>
<feature type="glycosylation site" description="N-linked (GlcNAc...) asparagine" evidence="2">
    <location>
        <position position="37"/>
    </location>
</feature>
<feature type="glycosylation site" description="N-linked (GlcNAc...) asparagine" evidence="2">
    <location>
        <position position="78"/>
    </location>
</feature>
<feature type="glycosylation site" description="N-linked (GlcNAc...) asparagine" evidence="2">
    <location>
        <position position="114"/>
    </location>
</feature>
<feature type="glycosylation site" description="N-linked (GlcNAc...) asparagine" evidence="2">
    <location>
        <position position="187"/>
    </location>
</feature>
<feature type="glycosylation site" description="N-linked (GlcNAc...) asparagine" evidence="2">
    <location>
        <position position="296"/>
    </location>
</feature>
<feature type="glycosylation site" description="N-linked (GlcNAc...) asparagine" evidence="2">
    <location>
        <position position="323"/>
    </location>
</feature>
<feature type="glycosylation site" description="N-linked (GlcNAc...) asparagine" evidence="2">
    <location>
        <position position="330"/>
    </location>
</feature>
<feature type="glycosylation site" description="N-linked (GlcNAc...) asparagine" evidence="2">
    <location>
        <position position="373"/>
    </location>
</feature>
<feature type="glycosylation site" description="N-linked (GlcNAc...) asparagine" evidence="2">
    <location>
        <position position="383"/>
    </location>
</feature>
<feature type="glycosylation site" description="N-linked (GlcNAc...) asparagine" evidence="2">
    <location>
        <position position="400"/>
    </location>
</feature>
<feature type="glycosylation site" description="N-linked (GlcNAc...) asparagine" evidence="2">
    <location>
        <position position="418"/>
    </location>
</feature>
<feature type="glycosylation site" description="N-linked (GlcNAc...) asparagine" evidence="2">
    <location>
        <position position="441"/>
    </location>
</feature>
<feature type="glycosylation site" description="N-linked (GlcNAc...) asparagine" evidence="2">
    <location>
        <position position="479"/>
    </location>
</feature>
<feature type="glycosylation site" description="N-linked (GlcNAc...) asparagine" evidence="2">
    <location>
        <position position="545"/>
    </location>
</feature>
<gene>
    <name type="primary">IRX12</name>
    <name type="synonym">LAC4</name>
    <name type="ordered locus">At2g38080</name>
    <name type="ORF">F16M14.1</name>
</gene>
<accession>O80434</accession>
<accession>Q940U7</accession>
<dbReference type="EC" id="1.10.3.2"/>
<dbReference type="EMBL" id="AC003028">
    <property type="protein sequence ID" value="AAC27158.2"/>
    <property type="molecule type" value="Genomic_DNA"/>
</dbReference>
<dbReference type="EMBL" id="CP002685">
    <property type="protein sequence ID" value="AEC09487.1"/>
    <property type="molecule type" value="Genomic_DNA"/>
</dbReference>
<dbReference type="EMBL" id="AY052669">
    <property type="protein sequence ID" value="AAK96573.1"/>
    <property type="molecule type" value="mRNA"/>
</dbReference>
<dbReference type="EMBL" id="AY063730">
    <property type="protein sequence ID" value="AAL36080.1"/>
    <property type="molecule type" value="mRNA"/>
</dbReference>
<dbReference type="EMBL" id="AY065187">
    <property type="protein sequence ID" value="AAL38363.1"/>
    <property type="molecule type" value="mRNA"/>
</dbReference>
<dbReference type="EMBL" id="AY114636">
    <property type="protein sequence ID" value="AAM47955.1"/>
    <property type="molecule type" value="mRNA"/>
</dbReference>
<dbReference type="PIR" id="T01240">
    <property type="entry name" value="T01240"/>
</dbReference>
<dbReference type="RefSeq" id="NP_565881.1">
    <property type="nucleotide sequence ID" value="NM_129364.4"/>
</dbReference>
<dbReference type="SMR" id="O80434"/>
<dbReference type="FunCoup" id="O80434">
    <property type="interactions" value="29"/>
</dbReference>
<dbReference type="STRING" id="3702.O80434"/>
<dbReference type="GlyCosmos" id="O80434">
    <property type="glycosylation" value="14 sites, No reported glycans"/>
</dbReference>
<dbReference type="GlyGen" id="O80434">
    <property type="glycosylation" value="14 sites"/>
</dbReference>
<dbReference type="PaxDb" id="3702-AT2G38080.1"/>
<dbReference type="ProteomicsDB" id="237068"/>
<dbReference type="EnsemblPlants" id="AT2G38080.1">
    <property type="protein sequence ID" value="AT2G38080.1"/>
    <property type="gene ID" value="AT2G38080"/>
</dbReference>
<dbReference type="GeneID" id="818386"/>
<dbReference type="Gramene" id="AT2G38080.1">
    <property type="protein sequence ID" value="AT2G38080.1"/>
    <property type="gene ID" value="AT2G38080"/>
</dbReference>
<dbReference type="KEGG" id="ath:AT2G38080"/>
<dbReference type="Araport" id="AT2G38080"/>
<dbReference type="TAIR" id="AT2G38080">
    <property type="gene designation" value="IRX12"/>
</dbReference>
<dbReference type="eggNOG" id="KOG1263">
    <property type="taxonomic scope" value="Eukaryota"/>
</dbReference>
<dbReference type="HOGENOM" id="CLU_006504_6_3_1"/>
<dbReference type="InParanoid" id="O80434"/>
<dbReference type="OMA" id="WYHTAAS"/>
<dbReference type="OrthoDB" id="2121828at2759"/>
<dbReference type="PhylomeDB" id="O80434"/>
<dbReference type="BioCyc" id="ARA:AT2G38080-MONOMER"/>
<dbReference type="BioCyc" id="MetaCyc:AT2G38080-MONOMER"/>
<dbReference type="PRO" id="PR:O80434"/>
<dbReference type="Proteomes" id="UP000006548">
    <property type="component" value="Chromosome 2"/>
</dbReference>
<dbReference type="ExpressionAtlas" id="O80434">
    <property type="expression patterns" value="baseline and differential"/>
</dbReference>
<dbReference type="GO" id="GO:0048046">
    <property type="term" value="C:apoplast"/>
    <property type="evidence" value="ECO:0007669"/>
    <property type="project" value="UniProtKB-SubCell"/>
</dbReference>
<dbReference type="GO" id="GO:0009505">
    <property type="term" value="C:plant-type cell wall"/>
    <property type="evidence" value="ECO:0000314"/>
    <property type="project" value="TAIR"/>
</dbReference>
<dbReference type="GO" id="GO:0005507">
    <property type="term" value="F:copper ion binding"/>
    <property type="evidence" value="ECO:0007669"/>
    <property type="project" value="InterPro"/>
</dbReference>
<dbReference type="GO" id="GO:0052716">
    <property type="term" value="F:hydroquinone:oxygen oxidoreductase activity"/>
    <property type="evidence" value="ECO:0007669"/>
    <property type="project" value="UniProtKB-EC"/>
</dbReference>
<dbReference type="GO" id="GO:0016491">
    <property type="term" value="F:oxidoreductase activity"/>
    <property type="evidence" value="ECO:0000315"/>
    <property type="project" value="TAIR"/>
</dbReference>
<dbReference type="GO" id="GO:0009809">
    <property type="term" value="P:lignin biosynthetic process"/>
    <property type="evidence" value="ECO:0000315"/>
    <property type="project" value="TAIR"/>
</dbReference>
<dbReference type="GO" id="GO:0046274">
    <property type="term" value="P:lignin catabolic process"/>
    <property type="evidence" value="ECO:0007669"/>
    <property type="project" value="UniProtKB-KW"/>
</dbReference>
<dbReference type="GO" id="GO:0009834">
    <property type="term" value="P:plant-type secondary cell wall biogenesis"/>
    <property type="evidence" value="ECO:0000315"/>
    <property type="project" value="TAIR"/>
</dbReference>
<dbReference type="CDD" id="cd13849">
    <property type="entry name" value="CuRO_1_LCC_plant"/>
    <property type="match status" value="1"/>
</dbReference>
<dbReference type="CDD" id="cd13875">
    <property type="entry name" value="CuRO_2_LCC_plant"/>
    <property type="match status" value="1"/>
</dbReference>
<dbReference type="CDD" id="cd13897">
    <property type="entry name" value="CuRO_3_LCC_plant"/>
    <property type="match status" value="1"/>
</dbReference>
<dbReference type="FunFam" id="2.60.40.420:FF:000049">
    <property type="entry name" value="Laccase"/>
    <property type="match status" value="1"/>
</dbReference>
<dbReference type="FunFam" id="2.60.40.420:FF:000053">
    <property type="entry name" value="Laccase"/>
    <property type="match status" value="1"/>
</dbReference>
<dbReference type="FunFam" id="2.60.40.420:FF:000062">
    <property type="entry name" value="Laccase"/>
    <property type="match status" value="1"/>
</dbReference>
<dbReference type="Gene3D" id="2.60.40.420">
    <property type="entry name" value="Cupredoxins - blue copper proteins"/>
    <property type="match status" value="3"/>
</dbReference>
<dbReference type="InterPro" id="IPR011707">
    <property type="entry name" value="Cu-oxidase-like_N"/>
</dbReference>
<dbReference type="InterPro" id="IPR001117">
    <property type="entry name" value="Cu-oxidase_2nd"/>
</dbReference>
<dbReference type="InterPro" id="IPR011706">
    <property type="entry name" value="Cu-oxidase_C"/>
</dbReference>
<dbReference type="InterPro" id="IPR045087">
    <property type="entry name" value="Cu-oxidase_fam"/>
</dbReference>
<dbReference type="InterPro" id="IPR033138">
    <property type="entry name" value="Cu_oxidase_CS"/>
</dbReference>
<dbReference type="InterPro" id="IPR002355">
    <property type="entry name" value="Cu_oxidase_Cu_BS"/>
</dbReference>
<dbReference type="InterPro" id="IPR008972">
    <property type="entry name" value="Cupredoxin"/>
</dbReference>
<dbReference type="InterPro" id="IPR034288">
    <property type="entry name" value="CuRO_1_LCC"/>
</dbReference>
<dbReference type="InterPro" id="IPR034285">
    <property type="entry name" value="CuRO_2_LCC"/>
</dbReference>
<dbReference type="InterPro" id="IPR034289">
    <property type="entry name" value="CuRO_3_LCC"/>
</dbReference>
<dbReference type="InterPro" id="IPR017761">
    <property type="entry name" value="Laccase"/>
</dbReference>
<dbReference type="NCBIfam" id="TIGR03389">
    <property type="entry name" value="laccase"/>
    <property type="match status" value="1"/>
</dbReference>
<dbReference type="PANTHER" id="PTHR11709:SF370">
    <property type="entry name" value="LACCASE-4"/>
    <property type="match status" value="1"/>
</dbReference>
<dbReference type="PANTHER" id="PTHR11709">
    <property type="entry name" value="MULTI-COPPER OXIDASE"/>
    <property type="match status" value="1"/>
</dbReference>
<dbReference type="Pfam" id="PF00394">
    <property type="entry name" value="Cu-oxidase"/>
    <property type="match status" value="1"/>
</dbReference>
<dbReference type="Pfam" id="PF07731">
    <property type="entry name" value="Cu-oxidase_2"/>
    <property type="match status" value="1"/>
</dbReference>
<dbReference type="Pfam" id="PF07732">
    <property type="entry name" value="Cu-oxidase_3"/>
    <property type="match status" value="1"/>
</dbReference>
<dbReference type="SUPFAM" id="SSF49503">
    <property type="entry name" value="Cupredoxins"/>
    <property type="match status" value="3"/>
</dbReference>
<dbReference type="PROSITE" id="PS00079">
    <property type="entry name" value="MULTICOPPER_OXIDASE1"/>
    <property type="match status" value="1"/>
</dbReference>
<dbReference type="PROSITE" id="PS00080">
    <property type="entry name" value="MULTICOPPER_OXIDASE2"/>
    <property type="match status" value="1"/>
</dbReference>
<reference key="1">
    <citation type="journal article" date="1999" name="Nature">
        <title>Sequence and analysis of chromosome 2 of the plant Arabidopsis thaliana.</title>
        <authorList>
            <person name="Lin X."/>
            <person name="Kaul S."/>
            <person name="Rounsley S.D."/>
            <person name="Shea T.P."/>
            <person name="Benito M.-I."/>
            <person name="Town C.D."/>
            <person name="Fujii C.Y."/>
            <person name="Mason T.M."/>
            <person name="Bowman C.L."/>
            <person name="Barnstead M.E."/>
            <person name="Feldblyum T.V."/>
            <person name="Buell C.R."/>
            <person name="Ketchum K.A."/>
            <person name="Lee J.J."/>
            <person name="Ronning C.M."/>
            <person name="Koo H.L."/>
            <person name="Moffat K.S."/>
            <person name="Cronin L.A."/>
            <person name="Shen M."/>
            <person name="Pai G."/>
            <person name="Van Aken S."/>
            <person name="Umayam L."/>
            <person name="Tallon L.J."/>
            <person name="Gill J.E."/>
            <person name="Adams M.D."/>
            <person name="Carrera A.J."/>
            <person name="Creasy T.H."/>
            <person name="Goodman H.M."/>
            <person name="Somerville C.R."/>
            <person name="Copenhaver G.P."/>
            <person name="Preuss D."/>
            <person name="Nierman W.C."/>
            <person name="White O."/>
            <person name="Eisen J.A."/>
            <person name="Salzberg S.L."/>
            <person name="Fraser C.M."/>
            <person name="Venter J.C."/>
        </authorList>
    </citation>
    <scope>NUCLEOTIDE SEQUENCE [LARGE SCALE GENOMIC DNA]</scope>
    <source>
        <strain>cv. Columbia</strain>
    </source>
</reference>
<reference key="2">
    <citation type="journal article" date="2017" name="Plant J.">
        <title>Araport11: a complete reannotation of the Arabidopsis thaliana reference genome.</title>
        <authorList>
            <person name="Cheng C.Y."/>
            <person name="Krishnakumar V."/>
            <person name="Chan A.P."/>
            <person name="Thibaud-Nissen F."/>
            <person name="Schobel S."/>
            <person name="Town C.D."/>
        </authorList>
    </citation>
    <scope>GENOME REANNOTATION</scope>
    <source>
        <strain>cv. Columbia</strain>
    </source>
</reference>
<reference key="3">
    <citation type="journal article" date="2003" name="Science">
        <title>Empirical analysis of transcriptional activity in the Arabidopsis genome.</title>
        <authorList>
            <person name="Yamada K."/>
            <person name="Lim J."/>
            <person name="Dale J.M."/>
            <person name="Chen H."/>
            <person name="Shinn P."/>
            <person name="Palm C.J."/>
            <person name="Southwick A.M."/>
            <person name="Wu H.C."/>
            <person name="Kim C.J."/>
            <person name="Nguyen M."/>
            <person name="Pham P.K."/>
            <person name="Cheuk R.F."/>
            <person name="Karlin-Newmann G."/>
            <person name="Liu S.X."/>
            <person name="Lam B."/>
            <person name="Sakano H."/>
            <person name="Wu T."/>
            <person name="Yu G."/>
            <person name="Miranda M."/>
            <person name="Quach H.L."/>
            <person name="Tripp M."/>
            <person name="Chang C.H."/>
            <person name="Lee J.M."/>
            <person name="Toriumi M.J."/>
            <person name="Chan M.M."/>
            <person name="Tang C.C."/>
            <person name="Onodera C.S."/>
            <person name="Deng J.M."/>
            <person name="Akiyama K."/>
            <person name="Ansari Y."/>
            <person name="Arakawa T."/>
            <person name="Banh J."/>
            <person name="Banno F."/>
            <person name="Bowser L."/>
            <person name="Brooks S.Y."/>
            <person name="Carninci P."/>
            <person name="Chao Q."/>
            <person name="Choy N."/>
            <person name="Enju A."/>
            <person name="Goldsmith A.D."/>
            <person name="Gurjal M."/>
            <person name="Hansen N.F."/>
            <person name="Hayashizaki Y."/>
            <person name="Johnson-Hopson C."/>
            <person name="Hsuan V.W."/>
            <person name="Iida K."/>
            <person name="Karnes M."/>
            <person name="Khan S."/>
            <person name="Koesema E."/>
            <person name="Ishida J."/>
            <person name="Jiang P.X."/>
            <person name="Jones T."/>
            <person name="Kawai J."/>
            <person name="Kamiya A."/>
            <person name="Meyers C."/>
            <person name="Nakajima M."/>
            <person name="Narusaka M."/>
            <person name="Seki M."/>
            <person name="Sakurai T."/>
            <person name="Satou M."/>
            <person name="Tamse R."/>
            <person name="Vaysberg M."/>
            <person name="Wallender E.K."/>
            <person name="Wong C."/>
            <person name="Yamamura Y."/>
            <person name="Yuan S."/>
            <person name="Shinozaki K."/>
            <person name="Davis R.W."/>
            <person name="Theologis A."/>
            <person name="Ecker J.R."/>
        </authorList>
    </citation>
    <scope>NUCLEOTIDE SEQUENCE [LARGE SCALE MRNA]</scope>
    <source>
        <strain>cv. Columbia</strain>
    </source>
</reference>
<reference key="4">
    <citation type="journal article" date="2005" name="Plant Cell">
        <title>Identification of novel genes in Arabidopsis involved in secondary cell wall formation using expression profiling and reverse genetics.</title>
        <authorList>
            <person name="Brown D.M."/>
            <person name="Zeef L.A.H."/>
            <person name="Ellis J."/>
            <person name="Goodacre R."/>
            <person name="Turner S.R."/>
        </authorList>
    </citation>
    <scope>FUNCTION</scope>
</reference>
<reference key="5">
    <citation type="journal article" date="2005" name="Planta">
        <title>Gene structure and molecular analysis of the laccase-like multicopper oxidase (LMCO) gene family in Arabidopsis thaliana.</title>
        <authorList>
            <person name="McCaig B.C."/>
            <person name="Meagher R.B."/>
            <person name="Dean J.F.D."/>
        </authorList>
    </citation>
    <scope>TISSUE SPECIFICITY</scope>
    <scope>DEVELOPMENTAL STAGE</scope>
</reference>
<reference key="6">
    <citation type="journal article" date="2006" name="J. Exp. Bot.">
        <title>Mutant identification and characterization of the laccase gene family in Arabidopsis.</title>
        <authorList>
            <person name="Cai X."/>
            <person name="Davis E.J."/>
            <person name="Ballif J."/>
            <person name="Liang M."/>
            <person name="Bushman E."/>
            <person name="Haroldsen V."/>
            <person name="Torabinejad J."/>
            <person name="Wu Y."/>
        </authorList>
    </citation>
    <scope>TISSUE SPECIFICITY</scope>
</reference>
<comment type="function">
    <text evidence="1 4">Lignin degradation and detoxification of lignin-derived products (By similarity). Required for secondary xylem cell wall lignification.</text>
</comment>
<comment type="catalytic activity">
    <reaction>
        <text>4 hydroquinone + O2 = 4 benzosemiquinone + 2 H2O</text>
        <dbReference type="Rhea" id="RHEA:11276"/>
        <dbReference type="ChEBI" id="CHEBI:15377"/>
        <dbReference type="ChEBI" id="CHEBI:15379"/>
        <dbReference type="ChEBI" id="CHEBI:17594"/>
        <dbReference type="ChEBI" id="CHEBI:17977"/>
        <dbReference type="EC" id="1.10.3.2"/>
    </reaction>
</comment>
<comment type="cofactor">
    <cofactor evidence="1">
        <name>Cu cation</name>
        <dbReference type="ChEBI" id="CHEBI:23378"/>
    </cofactor>
    <text evidence="1">Binds 4 Cu cations per monomer.</text>
</comment>
<comment type="subcellular location">
    <subcellularLocation>
        <location evidence="6">Secreted</location>
        <location evidence="6">Extracellular space</location>
        <location evidence="6">Apoplast</location>
    </subcellularLocation>
</comment>
<comment type="tissue specificity">
    <text evidence="3 5">Ubiquitous, with higher levels in the inflorescence stem.</text>
</comment>
<comment type="developmental stage">
    <text evidence="3">Transcript levels diminished during rosette leaves development.</text>
</comment>
<comment type="similarity">
    <text evidence="6">Belongs to the multicopper oxidase family.</text>
</comment>
<name>LAC4_ARATH</name>
<evidence type="ECO:0000250" key="1"/>
<evidence type="ECO:0000255" key="2"/>
<evidence type="ECO:0000269" key="3">
    <source>
    </source>
</evidence>
<evidence type="ECO:0000269" key="4">
    <source>
    </source>
</evidence>
<evidence type="ECO:0000269" key="5">
    <source>
    </source>
</evidence>
<evidence type="ECO:0000305" key="6"/>
<sequence>MGSHMVWFLFLVSFFSVFPAPSESMVRHYKFNVVMKNVTRLCSSKPTVTVNGRYPGPTIYAREDDTLLIKVVNHVKYNVSIHWHGVRQVRTGWADGPAYITQCPIQPGQVYTYNYTLTGQRGTLWWHAHILWLRATVYGALVILPKRGVPYPFPKPDNEKVIVLGEWWKSDTENIINEALKSGLAPNVSDSHMINGHPGPVRNCPSQGYKLSVENGKTYLLRLVNAALNEELFFKVAGHIFTVVEVDAVYVKPFKTDTVLIAPGQTTNVLLTASKSAGKYLVTASPFMDAPIAVDNVTATATVHYSGTLSSSPTILTLPPPQNATSIANNFTNSLRSLNSKKYPALVPTTIDHHLFFTVGLGLNACPTCKAGNGSRVVASINNVTFIMPKTALLPAHYFNTSGVFTTDFPKNPPHVFNYSGGSVTNMATETGTRLYKLPYNATVQLVLQDTGVIAPENHPVHLHGFNFFEVGRGLGNFNSTKDPKNFNLVDPVERNTIGVPSGGWVVIRFRADNPGVWFMHCHLEVHTTWGLKMAFLVENGKGPNQSILPPPKDLPKC</sequence>
<protein>
    <recommendedName>
        <fullName>Laccase-4</fullName>
        <ecNumber>1.10.3.2</ecNumber>
    </recommendedName>
    <alternativeName>
        <fullName>Benzenediol:oxygen oxidoreductase 4</fullName>
    </alternativeName>
    <alternativeName>
        <fullName>Diphenol oxidase 4</fullName>
    </alternativeName>
    <alternativeName>
        <fullName>Protein IRREGULAR XYLEM 12</fullName>
    </alternativeName>
    <alternativeName>
        <fullName>Urishiol oxidase 4</fullName>
    </alternativeName>
</protein>
<organism>
    <name type="scientific">Arabidopsis thaliana</name>
    <name type="common">Mouse-ear cress</name>
    <dbReference type="NCBI Taxonomy" id="3702"/>
    <lineage>
        <taxon>Eukaryota</taxon>
        <taxon>Viridiplantae</taxon>
        <taxon>Streptophyta</taxon>
        <taxon>Embryophyta</taxon>
        <taxon>Tracheophyta</taxon>
        <taxon>Spermatophyta</taxon>
        <taxon>Magnoliopsida</taxon>
        <taxon>eudicotyledons</taxon>
        <taxon>Gunneridae</taxon>
        <taxon>Pentapetalae</taxon>
        <taxon>rosids</taxon>
        <taxon>malvids</taxon>
        <taxon>Brassicales</taxon>
        <taxon>Brassicaceae</taxon>
        <taxon>Camelineae</taxon>
        <taxon>Arabidopsis</taxon>
    </lineage>
</organism>
<keyword id="KW-0052">Apoplast</keyword>
<keyword id="KW-0186">Copper</keyword>
<keyword id="KW-0325">Glycoprotein</keyword>
<keyword id="KW-0439">Lignin degradation</keyword>
<keyword id="KW-0479">Metal-binding</keyword>
<keyword id="KW-0560">Oxidoreductase</keyword>
<keyword id="KW-1185">Reference proteome</keyword>
<keyword id="KW-0677">Repeat</keyword>
<keyword id="KW-0964">Secreted</keyword>
<keyword id="KW-0732">Signal</keyword>
<proteinExistence type="evidence at transcript level"/>